<sequence>MNKILLLILLESIVFLSCSGKGSLGSEIPKVSLIIDGTFDDKSFNESALNGVKKVKEEFKIELVLKESSSNSYLSDLEGLKDAGSDLIWLIGYRFSDVAKVAALQNPDMKYAIIDPIYSNDPIPANLVGMTFRAQEGAFLTGYIAAKLSKTGKIGFLGGIEGEIVDAFRYGYEAGAKYANKDIKISTQYIGSFADLEAGRSVATRMYSDEIDIIHHAAGLGGIGAIEVAKELGSGHYIIGVDEDQAYLAPDNVITSTTKDVGRALNIFTSNHLKTNTFEGGKLINYGLKEGVVGFVRNPKMISFELEKEIDNLSSKIINKEIIVPSNKESYEKFLKEFI</sequence>
<name>BMPA_BORBU</name>
<comment type="function">
    <text evidence="1 2 6">Immunogenic protein (PubMed:8050720). May be part of an ABC-type nucleoside uptake system involved in the purine salvage pathway (PubMed:31988175).</text>
</comment>
<comment type="subunit">
    <text evidence="1">Monomer.</text>
</comment>
<comment type="subcellular location">
    <subcellularLocation>
        <location evidence="5">Cell inner membrane</location>
        <topology evidence="5">Lipid-anchor</topology>
    </subcellularLocation>
</comment>
<comment type="similarity">
    <text evidence="5">Belongs to the BMP lipoprotein family.</text>
</comment>
<proteinExistence type="inferred from homology"/>
<gene>
    <name type="primary">bmpA</name>
    <name type="ordered locus">BB_0383</name>
</gene>
<evidence type="ECO:0000250" key="1">
    <source>
        <dbReference type="UniProtKB" id="P0CL55"/>
    </source>
</evidence>
<evidence type="ECO:0000269" key="2">
    <source>
    </source>
</evidence>
<evidence type="ECO:0000303" key="3">
    <source>
    </source>
</evidence>
<evidence type="ECO:0000303" key="4">
    <source>
    </source>
</evidence>
<evidence type="ECO:0000305" key="5"/>
<evidence type="ECO:0000305" key="6">
    <source>
    </source>
</evidence>
<accession>Q45010</accession>
<accession>P94249</accession>
<accession>Q44857</accession>
<reference key="1">
    <citation type="journal article" date="1994" name="FEMS Microbiol. Lett.">
        <title>Nucleotide sequence and analysis of the gene in Borrelia burgdorferi encoding the immunogenic P39 antigen.</title>
        <authorList>
            <person name="Simpson W.J."/>
            <person name="Cieplak W."/>
            <person name="Schrumpf M.E."/>
            <person name="Barbour A.G."/>
            <person name="Schwan T.G."/>
        </authorList>
    </citation>
    <scope>NUCLEOTIDE SEQUENCE [GENOMIC DNA]</scope>
    <source>
        <strain>Sh-2-82</strain>
    </source>
</reference>
<reference key="2">
    <citation type="journal article" date="1996" name="FEMS Microbiol. Lett.">
        <title>Identification and mapping of a chromosomal gene cluster of Borrelia burgdorferi containing genes expressed in vivo.</title>
        <authorList>
            <person name="Aron L."/>
            <person name="Toth C."/>
            <person name="Godfrey H.P."/>
            <person name="Cabello F.C."/>
        </authorList>
    </citation>
    <scope>NUCLEOTIDE SEQUENCE [GENOMIC DNA]</scope>
    <source>
        <strain>ATCC 53899 / 297</strain>
    </source>
</reference>
<reference key="3">
    <citation type="submission" date="2001-07" db="EMBL/GenBank/DDBJ databases">
        <authorList>
            <person name="Orlova T."/>
            <person name="Bugrysheva J."/>
            <person name="Novikova S."/>
            <person name="Godfrey H.P."/>
            <person name="Cabello F.C."/>
        </authorList>
    </citation>
    <scope>NUCLEOTIDE SEQUENCE [GENOMIC DNA]</scope>
    <source>
        <strain>BL206</strain>
    </source>
</reference>
<reference key="4">
    <citation type="journal article" date="1997" name="Nature">
        <title>Genomic sequence of a Lyme disease spirochaete, Borrelia burgdorferi.</title>
        <authorList>
            <person name="Fraser C.M."/>
            <person name="Casjens S."/>
            <person name="Huang W.M."/>
            <person name="Sutton G.G."/>
            <person name="Clayton R.A."/>
            <person name="Lathigra R."/>
            <person name="White O."/>
            <person name="Ketchum K.A."/>
            <person name="Dodson R.J."/>
            <person name="Hickey E.K."/>
            <person name="Gwinn M.L."/>
            <person name="Dougherty B.A."/>
            <person name="Tomb J.-F."/>
            <person name="Fleischmann R.D."/>
            <person name="Richardson D.L."/>
            <person name="Peterson J.D."/>
            <person name="Kerlavage A.R."/>
            <person name="Quackenbush J."/>
            <person name="Salzberg S.L."/>
            <person name="Hanson M."/>
            <person name="van Vugt R."/>
            <person name="Palmer N."/>
            <person name="Adams M.D."/>
            <person name="Gocayne J.D."/>
            <person name="Weidman J.F."/>
            <person name="Utterback T.R."/>
            <person name="Watthey L."/>
            <person name="McDonald L.A."/>
            <person name="Artiach P."/>
            <person name="Bowman C."/>
            <person name="Garland S.A."/>
            <person name="Fujii C."/>
            <person name="Cotton M.D."/>
            <person name="Horst K."/>
            <person name="Roberts K.M."/>
            <person name="Hatch B."/>
            <person name="Smith H.O."/>
            <person name="Venter J.C."/>
        </authorList>
    </citation>
    <scope>NUCLEOTIDE SEQUENCE [LARGE SCALE GENOMIC DNA]</scope>
    <source>
        <strain>ATCC 35210 / DSM 4680 / CIP 102532 / B31</strain>
    </source>
</reference>
<reference key="5">
    <citation type="journal article" date="1994" name="Microbiology">
        <title>Conservation of gene arrangement and an unusual organization of rRNA genes in the linear chromosomes of the Lyme disease spirochaetes Borrelia burgdorferi, B. garinii and B. afzelii.</title>
        <authorList>
            <person name="Ojaimi C."/>
            <person name="Davidson B.E."/>
            <person name="Saint-Girons I."/>
            <person name="Old I.G."/>
        </authorList>
    </citation>
    <scope>NUCLEOTIDE SEQUENCE [GENOMIC DNA] OF 248-339</scope>
    <source>
        <strain>212</strain>
    </source>
</reference>
<reference key="6">
    <citation type="journal article" date="2020" name="Infect. Immun.">
        <title>Structural and Biomolecular Analyses of Borrelia burgdorferi BmpD Reveal a Substrate-Binding Protein of an ABC-Type Nucleoside Transporter Family.</title>
        <authorList>
            <person name="Cuellar J."/>
            <person name="Astrand M."/>
            <person name="Elovaara H."/>
            <person name="Pietikainen A."/>
            <person name="Siren S."/>
            <person name="Liljeblad A."/>
            <person name="Guedez G."/>
            <person name="Salminen T.A."/>
            <person name="Hytonen J."/>
        </authorList>
    </citation>
    <scope>POSSIBLE FUNCTION</scope>
    <source>
        <strain>ATCC 35210 / DSM 4680 / CIP 102532 / B31</strain>
    </source>
</reference>
<feature type="signal peptide" evidence="5">
    <location>
        <begin position="1"/>
        <end position="17"/>
    </location>
</feature>
<feature type="chain" id="PRO_0000017996" description="Basic membrane protein A">
    <location>
        <begin position="18"/>
        <end position="339"/>
    </location>
</feature>
<feature type="lipid moiety-binding region" description="N-palmitoyl cysteine" evidence="5">
    <location>
        <position position="18"/>
    </location>
</feature>
<feature type="lipid moiety-binding region" description="S-diacylglycerol cysteine" evidence="5">
    <location>
        <position position="18"/>
    </location>
</feature>
<feature type="sequence variant" description="In strain: 297.">
    <original>F</original>
    <variation>S</variation>
    <location>
        <position position="278"/>
    </location>
</feature>
<organism>
    <name type="scientific">Borreliella burgdorferi (strain ATCC 35210 / DSM 4680 / CIP 102532 / B31)</name>
    <name type="common">Borrelia burgdorferi</name>
    <dbReference type="NCBI Taxonomy" id="224326"/>
    <lineage>
        <taxon>Bacteria</taxon>
        <taxon>Pseudomonadati</taxon>
        <taxon>Spirochaetota</taxon>
        <taxon>Spirochaetia</taxon>
        <taxon>Spirochaetales</taxon>
        <taxon>Borreliaceae</taxon>
        <taxon>Borreliella</taxon>
    </lineage>
</organism>
<dbReference type="EMBL" id="L24194">
    <property type="protein sequence ID" value="AAA72406.1"/>
    <property type="molecule type" value="Genomic_DNA"/>
</dbReference>
<dbReference type="EMBL" id="U49938">
    <property type="protein sequence ID" value="AAC44712.1"/>
    <property type="molecule type" value="Genomic_DNA"/>
</dbReference>
<dbReference type="EMBL" id="AF400111">
    <property type="protein sequence ID" value="AAM89914.1"/>
    <property type="molecule type" value="Genomic_DNA"/>
</dbReference>
<dbReference type="EMBL" id="AE000783">
    <property type="protein sequence ID" value="AAC66757.1"/>
    <property type="molecule type" value="Genomic_DNA"/>
</dbReference>
<dbReference type="EMBL" id="L35050">
    <property type="protein sequence ID" value="AAC41401.1"/>
    <property type="molecule type" value="Genomic_DNA"/>
</dbReference>
<dbReference type="PIR" id="F70147">
    <property type="entry name" value="F70147"/>
</dbReference>
<dbReference type="RefSeq" id="NP_212517.1">
    <property type="nucleotide sequence ID" value="NC_001318.1"/>
</dbReference>
<dbReference type="RefSeq" id="WP_002656850.1">
    <property type="nucleotide sequence ID" value="NC_001318.1"/>
</dbReference>
<dbReference type="SMR" id="Q45010"/>
<dbReference type="STRING" id="224326.BB_0383"/>
<dbReference type="PaxDb" id="224326-BB_0383"/>
<dbReference type="EnsemblBacteria" id="AAC66757">
    <property type="protein sequence ID" value="AAC66757"/>
    <property type="gene ID" value="BB_0383"/>
</dbReference>
<dbReference type="KEGG" id="bbu:BB_0383"/>
<dbReference type="PATRIC" id="fig|224326.49.peg.778"/>
<dbReference type="HOGENOM" id="CLU_038813_0_2_12"/>
<dbReference type="OrthoDB" id="9769871at2"/>
<dbReference type="Proteomes" id="UP000001807">
    <property type="component" value="Chromosome"/>
</dbReference>
<dbReference type="GO" id="GO:0016020">
    <property type="term" value="C:membrane"/>
    <property type="evidence" value="ECO:0000314"/>
    <property type="project" value="CAFA"/>
</dbReference>
<dbReference type="GO" id="GO:0005886">
    <property type="term" value="C:plasma membrane"/>
    <property type="evidence" value="ECO:0007669"/>
    <property type="project" value="UniProtKB-SubCell"/>
</dbReference>
<dbReference type="CDD" id="cd06354">
    <property type="entry name" value="PBP1_PrnA-like"/>
    <property type="match status" value="1"/>
</dbReference>
<dbReference type="Gene3D" id="3.40.50.2300">
    <property type="match status" value="2"/>
</dbReference>
<dbReference type="InterPro" id="IPR050957">
    <property type="entry name" value="BMP_lipoprotein"/>
</dbReference>
<dbReference type="InterPro" id="IPR028082">
    <property type="entry name" value="Peripla_BP_I"/>
</dbReference>
<dbReference type="InterPro" id="IPR003760">
    <property type="entry name" value="PnrA-like"/>
</dbReference>
<dbReference type="PANTHER" id="PTHR34296:SF2">
    <property type="entry name" value="ABC TRANSPORTER GUANOSINE-BINDING PROTEIN NUPN"/>
    <property type="match status" value="1"/>
</dbReference>
<dbReference type="PANTHER" id="PTHR34296">
    <property type="entry name" value="TRANSCRIPTIONAL ACTIVATOR PROTEIN MED"/>
    <property type="match status" value="1"/>
</dbReference>
<dbReference type="Pfam" id="PF02608">
    <property type="entry name" value="Bmp"/>
    <property type="match status" value="1"/>
</dbReference>
<dbReference type="SUPFAM" id="SSF53822">
    <property type="entry name" value="Periplasmic binding protein-like I"/>
    <property type="match status" value="1"/>
</dbReference>
<keyword id="KW-0997">Cell inner membrane</keyword>
<keyword id="KW-1003">Cell membrane</keyword>
<keyword id="KW-0449">Lipoprotein</keyword>
<keyword id="KW-0472">Membrane</keyword>
<keyword id="KW-0564">Palmitate</keyword>
<keyword id="KW-1185">Reference proteome</keyword>
<keyword id="KW-0732">Signal</keyword>
<keyword id="KW-0813">Transport</keyword>
<protein>
    <recommendedName>
        <fullName>Basic membrane protein A</fullName>
    </recommendedName>
    <alternativeName>
        <fullName evidence="4">Immunodominant antigen P39</fullName>
    </alternativeName>
    <alternativeName>
        <fullName evidence="3">Probable substrate-binding protein BmpA</fullName>
    </alternativeName>
</protein>